<organism>
    <name type="scientific">Mus musculus</name>
    <name type="common">Mouse</name>
    <dbReference type="NCBI Taxonomy" id="10090"/>
    <lineage>
        <taxon>Eukaryota</taxon>
        <taxon>Metazoa</taxon>
        <taxon>Chordata</taxon>
        <taxon>Craniata</taxon>
        <taxon>Vertebrata</taxon>
        <taxon>Euteleostomi</taxon>
        <taxon>Mammalia</taxon>
        <taxon>Eutheria</taxon>
        <taxon>Euarchontoglires</taxon>
        <taxon>Glires</taxon>
        <taxon>Rodentia</taxon>
        <taxon>Myomorpha</taxon>
        <taxon>Muroidea</taxon>
        <taxon>Muridae</taxon>
        <taxon>Murinae</taxon>
        <taxon>Mus</taxon>
        <taxon>Mus</taxon>
    </lineage>
</organism>
<reference key="1">
    <citation type="submission" date="2002-04" db="EMBL/GenBank/DDBJ databases">
        <title>Novel gene identified from human APOE transgenic mice.</title>
        <authorList>
            <person name="Xue Y.-Q."/>
            <person name="Tian Z.-S."/>
            <person name="Tu Y.-J."/>
            <person name="Yang P."/>
            <person name="Sun M.-Z."/>
            <person name="He Q."/>
            <person name="Qi Z.-H."/>
        </authorList>
    </citation>
    <scope>NUCLEOTIDE SEQUENCE [GENOMIC DNA / MRNA]</scope>
    <source>
        <strain>C57BL/6 X DBA</strain>
        <strain>C57BL/6J</strain>
    </source>
</reference>
<reference key="2">
    <citation type="journal article" date="2005" name="Science">
        <title>The transcriptional landscape of the mammalian genome.</title>
        <authorList>
            <person name="Carninci P."/>
            <person name="Kasukawa T."/>
            <person name="Katayama S."/>
            <person name="Gough J."/>
            <person name="Frith M.C."/>
            <person name="Maeda N."/>
            <person name="Oyama R."/>
            <person name="Ravasi T."/>
            <person name="Lenhard B."/>
            <person name="Wells C."/>
            <person name="Kodzius R."/>
            <person name="Shimokawa K."/>
            <person name="Bajic V.B."/>
            <person name="Brenner S.E."/>
            <person name="Batalov S."/>
            <person name="Forrest A.R."/>
            <person name="Zavolan M."/>
            <person name="Davis M.J."/>
            <person name="Wilming L.G."/>
            <person name="Aidinis V."/>
            <person name="Allen J.E."/>
            <person name="Ambesi-Impiombato A."/>
            <person name="Apweiler R."/>
            <person name="Aturaliya R.N."/>
            <person name="Bailey T.L."/>
            <person name="Bansal M."/>
            <person name="Baxter L."/>
            <person name="Beisel K.W."/>
            <person name="Bersano T."/>
            <person name="Bono H."/>
            <person name="Chalk A.M."/>
            <person name="Chiu K.P."/>
            <person name="Choudhary V."/>
            <person name="Christoffels A."/>
            <person name="Clutterbuck D.R."/>
            <person name="Crowe M.L."/>
            <person name="Dalla E."/>
            <person name="Dalrymple B.P."/>
            <person name="de Bono B."/>
            <person name="Della Gatta G."/>
            <person name="di Bernardo D."/>
            <person name="Down T."/>
            <person name="Engstrom P."/>
            <person name="Fagiolini M."/>
            <person name="Faulkner G."/>
            <person name="Fletcher C.F."/>
            <person name="Fukushima T."/>
            <person name="Furuno M."/>
            <person name="Futaki S."/>
            <person name="Gariboldi M."/>
            <person name="Georgii-Hemming P."/>
            <person name="Gingeras T.R."/>
            <person name="Gojobori T."/>
            <person name="Green R.E."/>
            <person name="Gustincich S."/>
            <person name="Harbers M."/>
            <person name="Hayashi Y."/>
            <person name="Hensch T.K."/>
            <person name="Hirokawa N."/>
            <person name="Hill D."/>
            <person name="Huminiecki L."/>
            <person name="Iacono M."/>
            <person name="Ikeo K."/>
            <person name="Iwama A."/>
            <person name="Ishikawa T."/>
            <person name="Jakt M."/>
            <person name="Kanapin A."/>
            <person name="Katoh M."/>
            <person name="Kawasawa Y."/>
            <person name="Kelso J."/>
            <person name="Kitamura H."/>
            <person name="Kitano H."/>
            <person name="Kollias G."/>
            <person name="Krishnan S.P."/>
            <person name="Kruger A."/>
            <person name="Kummerfeld S.K."/>
            <person name="Kurochkin I.V."/>
            <person name="Lareau L.F."/>
            <person name="Lazarevic D."/>
            <person name="Lipovich L."/>
            <person name="Liu J."/>
            <person name="Liuni S."/>
            <person name="McWilliam S."/>
            <person name="Madan Babu M."/>
            <person name="Madera M."/>
            <person name="Marchionni L."/>
            <person name="Matsuda H."/>
            <person name="Matsuzawa S."/>
            <person name="Miki H."/>
            <person name="Mignone F."/>
            <person name="Miyake S."/>
            <person name="Morris K."/>
            <person name="Mottagui-Tabar S."/>
            <person name="Mulder N."/>
            <person name="Nakano N."/>
            <person name="Nakauchi H."/>
            <person name="Ng P."/>
            <person name="Nilsson R."/>
            <person name="Nishiguchi S."/>
            <person name="Nishikawa S."/>
            <person name="Nori F."/>
            <person name="Ohara O."/>
            <person name="Okazaki Y."/>
            <person name="Orlando V."/>
            <person name="Pang K.C."/>
            <person name="Pavan W.J."/>
            <person name="Pavesi G."/>
            <person name="Pesole G."/>
            <person name="Petrovsky N."/>
            <person name="Piazza S."/>
            <person name="Reed J."/>
            <person name="Reid J.F."/>
            <person name="Ring B.Z."/>
            <person name="Ringwald M."/>
            <person name="Rost B."/>
            <person name="Ruan Y."/>
            <person name="Salzberg S.L."/>
            <person name="Sandelin A."/>
            <person name="Schneider C."/>
            <person name="Schoenbach C."/>
            <person name="Sekiguchi K."/>
            <person name="Semple C.A."/>
            <person name="Seno S."/>
            <person name="Sessa L."/>
            <person name="Sheng Y."/>
            <person name="Shibata Y."/>
            <person name="Shimada H."/>
            <person name="Shimada K."/>
            <person name="Silva D."/>
            <person name="Sinclair B."/>
            <person name="Sperling S."/>
            <person name="Stupka E."/>
            <person name="Sugiura K."/>
            <person name="Sultana R."/>
            <person name="Takenaka Y."/>
            <person name="Taki K."/>
            <person name="Tammoja K."/>
            <person name="Tan S.L."/>
            <person name="Tang S."/>
            <person name="Taylor M.S."/>
            <person name="Tegner J."/>
            <person name="Teichmann S.A."/>
            <person name="Ueda H.R."/>
            <person name="van Nimwegen E."/>
            <person name="Verardo R."/>
            <person name="Wei C.L."/>
            <person name="Yagi K."/>
            <person name="Yamanishi H."/>
            <person name="Zabarovsky E."/>
            <person name="Zhu S."/>
            <person name="Zimmer A."/>
            <person name="Hide W."/>
            <person name="Bult C."/>
            <person name="Grimmond S.M."/>
            <person name="Teasdale R.D."/>
            <person name="Liu E.T."/>
            <person name="Brusic V."/>
            <person name="Quackenbush J."/>
            <person name="Wahlestedt C."/>
            <person name="Mattick J.S."/>
            <person name="Hume D.A."/>
            <person name="Kai C."/>
            <person name="Sasaki D."/>
            <person name="Tomaru Y."/>
            <person name="Fukuda S."/>
            <person name="Kanamori-Katayama M."/>
            <person name="Suzuki M."/>
            <person name="Aoki J."/>
            <person name="Arakawa T."/>
            <person name="Iida J."/>
            <person name="Imamura K."/>
            <person name="Itoh M."/>
            <person name="Kato T."/>
            <person name="Kawaji H."/>
            <person name="Kawagashira N."/>
            <person name="Kawashima T."/>
            <person name="Kojima M."/>
            <person name="Kondo S."/>
            <person name="Konno H."/>
            <person name="Nakano K."/>
            <person name="Ninomiya N."/>
            <person name="Nishio T."/>
            <person name="Okada M."/>
            <person name="Plessy C."/>
            <person name="Shibata K."/>
            <person name="Shiraki T."/>
            <person name="Suzuki S."/>
            <person name="Tagami M."/>
            <person name="Waki K."/>
            <person name="Watahiki A."/>
            <person name="Okamura-Oho Y."/>
            <person name="Suzuki H."/>
            <person name="Kawai J."/>
            <person name="Hayashizaki Y."/>
        </authorList>
    </citation>
    <scope>NUCLEOTIDE SEQUENCE [LARGE SCALE MRNA]</scope>
    <source>
        <strain>C57BL/6J</strain>
    </source>
</reference>
<reference key="3">
    <citation type="journal article" date="2004" name="Genome Res.">
        <title>The status, quality, and expansion of the NIH full-length cDNA project: the Mammalian Gene Collection (MGC).</title>
        <authorList>
            <consortium name="The MGC Project Team"/>
        </authorList>
    </citation>
    <scope>NUCLEOTIDE SEQUENCE [LARGE SCALE MRNA]</scope>
    <source>
        <strain>C57BL/6J</strain>
        <tissue>Brain</tissue>
    </source>
</reference>
<reference key="4">
    <citation type="journal article" date="2010" name="Cell">
        <title>A tissue-specific atlas of mouse protein phosphorylation and expression.</title>
        <authorList>
            <person name="Huttlin E.L."/>
            <person name="Jedrychowski M.P."/>
            <person name="Elias J.E."/>
            <person name="Goswami T."/>
            <person name="Rad R."/>
            <person name="Beausoleil S.A."/>
            <person name="Villen J."/>
            <person name="Haas W."/>
            <person name="Sowa M.E."/>
            <person name="Gygi S.P."/>
        </authorList>
    </citation>
    <scope>IDENTIFICATION BY MASS SPECTROMETRY [LARGE SCALE ANALYSIS]</scope>
    <source>
        <tissue>Brain</tissue>
        <tissue>Brown adipose tissue</tissue>
        <tissue>Heart</tissue>
        <tissue>Kidney</tissue>
        <tissue>Liver</tissue>
        <tissue>Lung</tissue>
        <tissue>Pancreas</tissue>
        <tissue>Spleen</tissue>
        <tissue>Testis</tissue>
    </source>
</reference>
<accession>Q8R404</accession>
<dbReference type="EMBL" id="AY091637">
    <property type="protein sequence ID" value="AAM14633.1"/>
    <property type="molecule type" value="mRNA"/>
</dbReference>
<dbReference type="EMBL" id="AF501666">
    <property type="protein sequence ID" value="AAM22184.1"/>
    <property type="molecule type" value="Genomic_DNA"/>
</dbReference>
<dbReference type="EMBL" id="AK075942">
    <property type="protein sequence ID" value="BAC36071.1"/>
    <property type="molecule type" value="mRNA"/>
</dbReference>
<dbReference type="EMBL" id="AK075961">
    <property type="protein sequence ID" value="BAC36083.1"/>
    <property type="molecule type" value="mRNA"/>
</dbReference>
<dbReference type="EMBL" id="BC056164">
    <property type="protein sequence ID" value="AAH56164.1"/>
    <property type="molecule type" value="mRNA"/>
</dbReference>
<dbReference type="CCDS" id="CCDS28908.1"/>
<dbReference type="RefSeq" id="NP_694792.1">
    <property type="nucleotide sequence ID" value="NM_153152.4"/>
</dbReference>
<dbReference type="BioGRID" id="230339">
    <property type="interactions" value="2"/>
</dbReference>
<dbReference type="FunCoup" id="Q8R404">
    <property type="interactions" value="746"/>
</dbReference>
<dbReference type="IntAct" id="Q8R404">
    <property type="interactions" value="2"/>
</dbReference>
<dbReference type="MINT" id="Q8R404"/>
<dbReference type="STRING" id="10090.ENSMUSP00000052908"/>
<dbReference type="GlyGen" id="Q8R404">
    <property type="glycosylation" value="2 sites, 1 O-linked glycan (1 site)"/>
</dbReference>
<dbReference type="iPTMnet" id="Q8R404"/>
<dbReference type="PhosphoSitePlus" id="Q8R404"/>
<dbReference type="SwissPalm" id="Q8R404"/>
<dbReference type="jPOST" id="Q8R404"/>
<dbReference type="PaxDb" id="10090-ENSMUSP00000052908"/>
<dbReference type="PeptideAtlas" id="Q8R404"/>
<dbReference type="ProteomicsDB" id="252552"/>
<dbReference type="Pumba" id="Q8R404"/>
<dbReference type="TopDownProteomics" id="Q8R404"/>
<dbReference type="Antibodypedia" id="49612">
    <property type="antibodies" value="21 antibodies from 12 providers"/>
</dbReference>
<dbReference type="DNASU" id="224904"/>
<dbReference type="Ensembl" id="ENSMUST00000052832.6">
    <property type="protein sequence ID" value="ENSMUSP00000052908.6"/>
    <property type="gene ID" value="ENSMUSG00000049760.7"/>
</dbReference>
<dbReference type="GeneID" id="224904"/>
<dbReference type="KEGG" id="mmu:224904"/>
<dbReference type="UCSC" id="uc008dcl.1">
    <property type="organism name" value="mouse"/>
</dbReference>
<dbReference type="AGR" id="MGI:2442174"/>
<dbReference type="CTD" id="125988"/>
<dbReference type="MGI" id="MGI:2442174">
    <property type="gene designation" value="Micos13"/>
</dbReference>
<dbReference type="VEuPathDB" id="HostDB:ENSMUSG00000049760"/>
<dbReference type="eggNOG" id="ENOG502S4BC">
    <property type="taxonomic scope" value="Eukaryota"/>
</dbReference>
<dbReference type="GeneTree" id="ENSGT00390000002629"/>
<dbReference type="HOGENOM" id="CLU_152642_0_1_1"/>
<dbReference type="InParanoid" id="Q8R404"/>
<dbReference type="OMA" id="GWKYMKD"/>
<dbReference type="OrthoDB" id="5948578at2759"/>
<dbReference type="PhylomeDB" id="Q8R404"/>
<dbReference type="TreeFam" id="TF343386"/>
<dbReference type="BioGRID-ORCS" id="224904">
    <property type="hits" value="11 hits in 78 CRISPR screens"/>
</dbReference>
<dbReference type="ChiTaRS" id="Micos13">
    <property type="organism name" value="mouse"/>
</dbReference>
<dbReference type="PRO" id="PR:Q8R404"/>
<dbReference type="Proteomes" id="UP000000589">
    <property type="component" value="Chromosome 17"/>
</dbReference>
<dbReference type="RNAct" id="Q8R404">
    <property type="molecule type" value="protein"/>
</dbReference>
<dbReference type="Bgee" id="ENSMUSG00000049760">
    <property type="expression patterns" value="Expressed in right kidney and 264 other cell types or tissues"/>
</dbReference>
<dbReference type="GO" id="GO:0061617">
    <property type="term" value="C:MICOS complex"/>
    <property type="evidence" value="ECO:0000250"/>
    <property type="project" value="UniProtKB"/>
</dbReference>
<dbReference type="GO" id="GO:0044284">
    <property type="term" value="C:mitochondrial crista junction"/>
    <property type="evidence" value="ECO:0000250"/>
    <property type="project" value="UniProtKB"/>
</dbReference>
<dbReference type="GO" id="GO:0005743">
    <property type="term" value="C:mitochondrial inner membrane"/>
    <property type="evidence" value="ECO:0000250"/>
    <property type="project" value="UniProtKB"/>
</dbReference>
<dbReference type="GO" id="GO:0005739">
    <property type="term" value="C:mitochondrion"/>
    <property type="evidence" value="ECO:0007005"/>
    <property type="project" value="MGI"/>
</dbReference>
<dbReference type="GO" id="GO:0005654">
    <property type="term" value="C:nucleoplasm"/>
    <property type="evidence" value="ECO:0007669"/>
    <property type="project" value="Ensembl"/>
</dbReference>
<dbReference type="GO" id="GO:0042407">
    <property type="term" value="P:cristae formation"/>
    <property type="evidence" value="ECO:0000250"/>
    <property type="project" value="UniProtKB"/>
</dbReference>
<dbReference type="InterPro" id="IPR026769">
    <property type="entry name" value="Mic13"/>
</dbReference>
<dbReference type="PANTHER" id="PTHR31816">
    <property type="entry name" value="MICOS COMPLEX SUBUNIT MIC13"/>
    <property type="match status" value="1"/>
</dbReference>
<dbReference type="PANTHER" id="PTHR31816:SF3">
    <property type="entry name" value="MICOS COMPLEX SUBUNIT MIC13"/>
    <property type="match status" value="1"/>
</dbReference>
<dbReference type="Pfam" id="PF15884">
    <property type="entry name" value="QIL1"/>
    <property type="match status" value="1"/>
</dbReference>
<sequence length="119" mass="13373">MVARVWSLMRFLIKGSVAGGAVYLVYDQELLGPSDKSEAALRKAEEVVPPAMYQFSQYVCQQTGLEMPQLPTPPKIKFPNFRDSWNSGIISVMSALSVAPSKAREYSKEGWEYLKEHSK</sequence>
<gene>
    <name type="primary">Micos13</name>
    <name type="synonym">Mic13</name>
    <name type="synonym">Qil1</name>
</gene>
<comment type="function">
    <text evidence="1">Component of the MICOS complex, a large protein complex of the mitochondrial inner membrane that plays crucial roles in the maintenance of crista junctions, inner membrane architecture, and formation of contact sites to the outer membrane. Constituent of mature MICOS complex, it is required for the formation of cristae junction (CJ) and maintenance of cristae morphology. Required for the incorporation of MICOS10/MIC10 into the MICOS complex.</text>
</comment>
<comment type="subunit">
    <text evidence="1">Component of the mitochondrial contact site and cristae organizing system (MICOS) complex, composed of at least MICOS10/MIC10, CHCHD3/MIC19, CHCHD6/MIC25, APOO/MIC26, MICOS13/MIC13, APOOL/MIC27 and IMMT/MIC60. The MICOS complex associates with mitochondrial outer membrane proteins SAMM50, MTX1 and MTX2 (together described as components of the mitochondrial outer membrane sorting assembly machinery (SAM) complex) and DNAJC11, mitochondrial inner membrane protein TMEM11 and with HSPA9. The MICOS and SAM complexes together with DNAJC11 are part of a large protein complex spanning both membranes termed the mitochondrial intermembrane space bridging (MIB) complex.</text>
</comment>
<comment type="subcellular location">
    <subcellularLocation>
        <location evidence="1">Mitochondrion inner membrane</location>
        <topology evidence="2">Single-pass membrane protein</topology>
    </subcellularLocation>
    <text evidence="1">Enriched at crista junctions.</text>
</comment>
<comment type="similarity">
    <text evidence="3">Belongs to the MICOS complex subunit Mic13 family.</text>
</comment>
<feature type="chain" id="PRO_0000289987" description="MICOS complex subunit MIC13">
    <location>
        <begin position="1"/>
        <end position="119"/>
    </location>
</feature>
<feature type="topological domain" description="Mitochondrial matrix" evidence="3">
    <location>
        <begin position="1"/>
        <end position="7"/>
    </location>
</feature>
<feature type="transmembrane region" description="Helical" evidence="2">
    <location>
        <begin position="8"/>
        <end position="26"/>
    </location>
</feature>
<feature type="topological domain" description="Mitochondrial intermembrane" evidence="3">
    <location>
        <begin position="27"/>
        <end position="119"/>
    </location>
</feature>
<proteinExistence type="evidence at protein level"/>
<keyword id="KW-0472">Membrane</keyword>
<keyword id="KW-0496">Mitochondrion</keyword>
<keyword id="KW-0999">Mitochondrion inner membrane</keyword>
<keyword id="KW-1185">Reference proteome</keyword>
<keyword id="KW-0812">Transmembrane</keyword>
<keyword id="KW-1133">Transmembrane helix</keyword>
<protein>
    <recommendedName>
        <fullName evidence="1">MICOS complex subunit MIC13</fullName>
    </recommendedName>
</protein>
<name>MIC13_MOUSE</name>
<evidence type="ECO:0000250" key="1">
    <source>
        <dbReference type="UniProtKB" id="Q5XKP0"/>
    </source>
</evidence>
<evidence type="ECO:0000255" key="2"/>
<evidence type="ECO:0000305" key="3"/>